<comment type="function">
    <text evidence="1">Involved in the modulation of the activity of the glucose-phosphotransferase system (glucose-PTS). Interacts with the transcriptional repressor Mlc, preventing its interaction with DNA and leading to the modulation of expression of genes regulated by Mlc, including ptsG, which encodes the PTS system glucose-specific EIICB component.</text>
</comment>
<comment type="function">
    <text evidence="1">Shows zinc-dependent metallopeptidase activity.</text>
</comment>
<comment type="cofactor">
    <cofactor evidence="1">
        <name>Zn(2+)</name>
        <dbReference type="ChEBI" id="CHEBI:29105"/>
    </cofactor>
    <text evidence="1">Binds 1 zinc ion per subunit.</text>
</comment>
<comment type="subunit">
    <text evidence="1">Interacts with Mlc.</text>
</comment>
<comment type="subcellular location">
    <subcellularLocation>
        <location evidence="1">Cytoplasm</location>
    </subcellularLocation>
</comment>
<comment type="similarity">
    <text evidence="1">Belongs to the MtfA family.</text>
</comment>
<evidence type="ECO:0000255" key="1">
    <source>
        <dbReference type="HAMAP-Rule" id="MF_01593"/>
    </source>
</evidence>
<proteinExistence type="inferred from homology"/>
<protein>
    <recommendedName>
        <fullName evidence="1">Mlc titration factor A</fullName>
    </recommendedName>
    <alternativeName>
        <fullName evidence="1">Probable zinc metallopeptidase MtfA</fullName>
        <ecNumber evidence="1">3.4.11.-</ecNumber>
    </alternativeName>
</protein>
<gene>
    <name evidence="1" type="primary">mtfA</name>
    <name type="ordered locus">SeAg_B2066</name>
</gene>
<accession>B5F981</accession>
<organism>
    <name type="scientific">Salmonella agona (strain SL483)</name>
    <dbReference type="NCBI Taxonomy" id="454166"/>
    <lineage>
        <taxon>Bacteria</taxon>
        <taxon>Pseudomonadati</taxon>
        <taxon>Pseudomonadota</taxon>
        <taxon>Gammaproteobacteria</taxon>
        <taxon>Enterobacterales</taxon>
        <taxon>Enterobacteriaceae</taxon>
        <taxon>Salmonella</taxon>
    </lineage>
</organism>
<name>MTFA_SALA4</name>
<feature type="chain" id="PRO_1000185709" description="Mlc titration factor A">
    <location>
        <begin position="1"/>
        <end position="265"/>
    </location>
</feature>
<feature type="binding site" evidence="1">
    <location>
        <position position="111"/>
    </location>
    <ligand>
        <name>Zn(2+)</name>
        <dbReference type="ChEBI" id="CHEBI:29105"/>
    </ligand>
</feature>
<feature type="binding site" evidence="1">
    <location>
        <position position="148"/>
    </location>
    <ligand>
        <name>Zn(2+)</name>
        <dbReference type="ChEBI" id="CHEBI:29105"/>
    </ligand>
</feature>
<feature type="binding site" evidence="1">
    <location>
        <position position="152"/>
    </location>
    <ligand>
        <name>Zn(2+)</name>
        <dbReference type="ChEBI" id="CHEBI:29105"/>
    </ligand>
</feature>
<feature type="binding site" evidence="1">
    <location>
        <position position="211"/>
    </location>
    <ligand>
        <name>Zn(2+)</name>
        <dbReference type="ChEBI" id="CHEBI:29105"/>
    </ligand>
</feature>
<reference key="1">
    <citation type="journal article" date="2011" name="J. Bacteriol.">
        <title>Comparative genomics of 28 Salmonella enterica isolates: evidence for CRISPR-mediated adaptive sublineage evolution.</title>
        <authorList>
            <person name="Fricke W.F."/>
            <person name="Mammel M.K."/>
            <person name="McDermott P.F."/>
            <person name="Tartera C."/>
            <person name="White D.G."/>
            <person name="Leclerc J.E."/>
            <person name="Ravel J."/>
            <person name="Cebula T.A."/>
        </authorList>
    </citation>
    <scope>NUCLEOTIDE SEQUENCE [LARGE SCALE GENOMIC DNA]</scope>
    <source>
        <strain>SL483</strain>
    </source>
</reference>
<keyword id="KW-0031">Aminopeptidase</keyword>
<keyword id="KW-0963">Cytoplasm</keyword>
<keyword id="KW-0378">Hydrolase</keyword>
<keyword id="KW-0479">Metal-binding</keyword>
<keyword id="KW-0482">Metalloprotease</keyword>
<keyword id="KW-0645">Protease</keyword>
<keyword id="KW-0862">Zinc</keyword>
<sequence>MIKWPWKAQEITQNEDWPWDDALAIPLLVNLTAQEQARLIALAERFLQQKRLVALQGFELDSLKSARIALIFCLPILELGIEWLDGFHEVLIYPAPFVVDDEWEDDIGLVHSQRVVQSGQSWQQGPIILNWLDILDSFDASGFNLIIHEVAHKLDMRNGDRASGIPFIPLRDVAGWEHDLHAAMNNIQDEIDLVGESAASIDAYAATDPAECFAVLSEYFFSAPELFAPRFPALWQRFCQFYRQDPSQRLRVSAAEGDYGEESEH</sequence>
<dbReference type="EC" id="3.4.11.-" evidence="1"/>
<dbReference type="EMBL" id="CP001138">
    <property type="protein sequence ID" value="ACH49762.1"/>
    <property type="molecule type" value="Genomic_DNA"/>
</dbReference>
<dbReference type="RefSeq" id="WP_000598916.1">
    <property type="nucleotide sequence ID" value="NC_011149.1"/>
</dbReference>
<dbReference type="SMR" id="B5F981"/>
<dbReference type="MEROPS" id="M90.001"/>
<dbReference type="KEGG" id="sea:SeAg_B2066"/>
<dbReference type="HOGENOM" id="CLU_063037_2_0_6"/>
<dbReference type="Proteomes" id="UP000008819">
    <property type="component" value="Chromosome"/>
</dbReference>
<dbReference type="GO" id="GO:0005829">
    <property type="term" value="C:cytosol"/>
    <property type="evidence" value="ECO:0007669"/>
    <property type="project" value="TreeGrafter"/>
</dbReference>
<dbReference type="GO" id="GO:0004177">
    <property type="term" value="F:aminopeptidase activity"/>
    <property type="evidence" value="ECO:0007669"/>
    <property type="project" value="UniProtKB-UniRule"/>
</dbReference>
<dbReference type="GO" id="GO:0008237">
    <property type="term" value="F:metallopeptidase activity"/>
    <property type="evidence" value="ECO:0007669"/>
    <property type="project" value="UniProtKB-UniRule"/>
</dbReference>
<dbReference type="GO" id="GO:0008270">
    <property type="term" value="F:zinc ion binding"/>
    <property type="evidence" value="ECO:0007669"/>
    <property type="project" value="UniProtKB-UniRule"/>
</dbReference>
<dbReference type="GO" id="GO:0006508">
    <property type="term" value="P:proteolysis"/>
    <property type="evidence" value="ECO:0007669"/>
    <property type="project" value="UniProtKB-KW"/>
</dbReference>
<dbReference type="CDD" id="cd20169">
    <property type="entry name" value="Peptidase_M90_mtfA"/>
    <property type="match status" value="1"/>
</dbReference>
<dbReference type="FunFam" id="1.10.472.150:FF:000001">
    <property type="entry name" value="Protein MtfA"/>
    <property type="match status" value="1"/>
</dbReference>
<dbReference type="FunFam" id="3.40.390.10:FF:000012">
    <property type="entry name" value="Protein MtfA"/>
    <property type="match status" value="1"/>
</dbReference>
<dbReference type="Gene3D" id="3.40.390.10">
    <property type="entry name" value="Collagenase (Catalytic Domain)"/>
    <property type="match status" value="1"/>
</dbReference>
<dbReference type="Gene3D" id="1.10.472.150">
    <property type="entry name" value="Glucose-regulated metallo-peptidase M90, N-terminal domain"/>
    <property type="match status" value="1"/>
</dbReference>
<dbReference type="HAMAP" id="MF_01593">
    <property type="entry name" value="MtfA"/>
    <property type="match status" value="1"/>
</dbReference>
<dbReference type="InterPro" id="IPR024079">
    <property type="entry name" value="MetalloPept_cat_dom_sf"/>
</dbReference>
<dbReference type="InterPro" id="IPR057256">
    <property type="entry name" value="MtfA_enterob"/>
</dbReference>
<dbReference type="InterPro" id="IPR010384">
    <property type="entry name" value="MtfA_fam"/>
</dbReference>
<dbReference type="InterPro" id="IPR042252">
    <property type="entry name" value="MtfA_N"/>
</dbReference>
<dbReference type="NCBIfam" id="NF011939">
    <property type="entry name" value="PRK15410.1"/>
    <property type="match status" value="1"/>
</dbReference>
<dbReference type="PANTHER" id="PTHR30164">
    <property type="entry name" value="MTFA PEPTIDASE"/>
    <property type="match status" value="1"/>
</dbReference>
<dbReference type="PANTHER" id="PTHR30164:SF2">
    <property type="entry name" value="PROTEIN MTFA"/>
    <property type="match status" value="1"/>
</dbReference>
<dbReference type="Pfam" id="PF06167">
    <property type="entry name" value="Peptidase_M90"/>
    <property type="match status" value="1"/>
</dbReference>
<dbReference type="SUPFAM" id="SSF55486">
    <property type="entry name" value="Metalloproteases ('zincins'), catalytic domain"/>
    <property type="match status" value="1"/>
</dbReference>